<proteinExistence type="evidence at protein level"/>
<name>WR52N_ARATH</name>
<evidence type="ECO:0000250" key="1">
    <source>
        <dbReference type="UniProtKB" id="P0DKH5"/>
    </source>
</evidence>
<evidence type="ECO:0000255" key="2"/>
<evidence type="ECO:0000255" key="3">
    <source>
        <dbReference type="PROSITE-ProRule" id="PRU00204"/>
    </source>
</evidence>
<evidence type="ECO:0000255" key="4">
    <source>
        <dbReference type="PROSITE-ProRule" id="PRU00223"/>
    </source>
</evidence>
<evidence type="ECO:0000255" key="5">
    <source>
        <dbReference type="PROSITE-ProRule" id="PRU00499"/>
    </source>
</evidence>
<evidence type="ECO:0000256" key="6">
    <source>
        <dbReference type="SAM" id="MobiDB-lite"/>
    </source>
</evidence>
<evidence type="ECO:0000269" key="7">
    <source>
    </source>
</evidence>
<evidence type="ECO:0000269" key="8">
    <source>
    </source>
</evidence>
<evidence type="ECO:0000269" key="9">
    <source>
    </source>
</evidence>
<evidence type="ECO:0000303" key="10">
    <source>
    </source>
</evidence>
<evidence type="ECO:0000303" key="11">
    <source>
    </source>
</evidence>
<evidence type="ECO:0000305" key="12"/>
<evidence type="ECO:0000305" key="13">
    <source>
    </source>
</evidence>
<evidence type="ECO:0000312" key="14">
    <source>
        <dbReference type="EMBL" id="ADM88042.1"/>
    </source>
</evidence>
<accession>E1B328</accession>
<accession>Q0WWA0</accession>
<accession>Q689Y9</accession>
<accession>Q8GZ83</accession>
<accession>Q9FH83</accession>
<accession>Q9FH84</accession>
<gene>
    <name evidence="10" type="primary">RRS1</name>
    <name type="synonym">RCH2</name>
    <name evidence="10" type="synonym">RRS1-R</name>
    <name type="synonym">RSH4</name>
    <name evidence="11" type="synonym">SLH1</name>
    <name type="synonym">WRKY52</name>
</gene>
<feature type="chain" id="PRO_0000431360" description="Disease resistance protein RRS1">
    <location>
        <begin position="1"/>
        <end position="1378"/>
    </location>
</feature>
<feature type="domain" description="TIR" evidence="3">
    <location>
        <begin position="5"/>
        <end position="146"/>
    </location>
</feature>
<feature type="domain" description="NB-ARC" evidence="2">
    <location>
        <begin position="170"/>
        <end position="421"/>
    </location>
</feature>
<feature type="repeat" description="LRR 1" evidence="2">
    <location>
        <begin position="498"/>
        <end position="522"/>
    </location>
</feature>
<feature type="repeat" description="LRR 2" evidence="2">
    <location>
        <begin position="535"/>
        <end position="553"/>
    </location>
</feature>
<feature type="repeat" description="LRR 3" evidence="2">
    <location>
        <begin position="554"/>
        <end position="575"/>
    </location>
</feature>
<feature type="repeat" description="LRR 4" evidence="2">
    <location>
        <begin position="577"/>
        <end position="598"/>
    </location>
</feature>
<feature type="repeat" description="LRR 5" evidence="2">
    <location>
        <begin position="621"/>
        <end position="646"/>
    </location>
</feature>
<feature type="repeat" description="LRR 6" evidence="2">
    <location>
        <begin position="665"/>
        <end position="688"/>
    </location>
</feature>
<feature type="repeat" description="LRR 7" evidence="2">
    <location>
        <begin position="742"/>
        <end position="766"/>
    </location>
</feature>
<feature type="repeat" description="LRR 8" evidence="2">
    <location>
        <begin position="768"/>
        <end position="793"/>
    </location>
</feature>
<feature type="repeat" description="LRR 9" evidence="2">
    <location>
        <begin position="831"/>
        <end position="854"/>
    </location>
</feature>
<feature type="DNA-binding region" description="WRKY" evidence="4">
    <location>
        <begin position="1204"/>
        <end position="1272"/>
    </location>
</feature>
<feature type="region of interest" description="Disordered" evidence="6">
    <location>
        <begin position="1300"/>
        <end position="1321"/>
    </location>
</feature>
<feature type="short sequence motif" description="Nuclear localization signal" evidence="2">
    <location>
        <begin position="988"/>
        <end position="1005"/>
    </location>
</feature>
<feature type="binding site" evidence="5">
    <location>
        <begin position="179"/>
        <end position="186"/>
    </location>
    <ligand>
        <name>ATP</name>
        <dbReference type="ChEBI" id="CHEBI:30616"/>
    </ligand>
</feature>
<feature type="mutagenesis site" description="In slh1; loss of DNA-binding activity and constitutive defense activation." evidence="9">
    <original>L</original>
    <variation>LL</variation>
    <location>
        <position position="1224"/>
    </location>
</feature>
<dbReference type="EMBL" id="HQ170631">
    <property type="protein sequence ID" value="ADM88042.1"/>
    <property type="molecule type" value="mRNA"/>
</dbReference>
<dbReference type="EMBL" id="AX103687">
    <property type="status" value="NOT_ANNOTATED_CDS"/>
    <property type="molecule type" value="Unassigned_DNA"/>
</dbReference>
<dbReference type="EMBL" id="AX103688">
    <property type="status" value="NOT_ANNOTATED_CDS"/>
    <property type="molecule type" value="Unassigned_DNA"/>
</dbReference>
<dbReference type="EMBL" id="AX103691">
    <property type="status" value="NOT_ANNOTATED_CDS"/>
    <property type="molecule type" value="Unassigned_DNA"/>
</dbReference>
<dbReference type="EMBL" id="AB188827">
    <property type="protein sequence ID" value="BAD38678.1"/>
    <property type="molecule type" value="Genomic_DNA"/>
</dbReference>
<dbReference type="SMR" id="E1B328"/>
<dbReference type="ExpressionAtlas" id="E1B328">
    <property type="expression patterns" value="baseline and differential"/>
</dbReference>
<dbReference type="GO" id="GO:0005737">
    <property type="term" value="C:cytoplasm"/>
    <property type="evidence" value="ECO:0007669"/>
    <property type="project" value="UniProtKB-SubCell"/>
</dbReference>
<dbReference type="GO" id="GO:0005634">
    <property type="term" value="C:nucleus"/>
    <property type="evidence" value="ECO:0007669"/>
    <property type="project" value="UniProtKB-SubCell"/>
</dbReference>
<dbReference type="GO" id="GO:0043531">
    <property type="term" value="F:ADP binding"/>
    <property type="evidence" value="ECO:0007669"/>
    <property type="project" value="InterPro"/>
</dbReference>
<dbReference type="GO" id="GO:0005524">
    <property type="term" value="F:ATP binding"/>
    <property type="evidence" value="ECO:0007669"/>
    <property type="project" value="UniProtKB-KW"/>
</dbReference>
<dbReference type="GO" id="GO:0003700">
    <property type="term" value="F:DNA-binding transcription factor activity"/>
    <property type="evidence" value="ECO:0007669"/>
    <property type="project" value="InterPro"/>
</dbReference>
<dbReference type="GO" id="GO:0043565">
    <property type="term" value="F:sequence-specific DNA binding"/>
    <property type="evidence" value="ECO:0007669"/>
    <property type="project" value="InterPro"/>
</dbReference>
<dbReference type="GO" id="GO:0006952">
    <property type="term" value="P:defense response"/>
    <property type="evidence" value="ECO:0007669"/>
    <property type="project" value="UniProtKB-KW"/>
</dbReference>
<dbReference type="GO" id="GO:0007165">
    <property type="term" value="P:signal transduction"/>
    <property type="evidence" value="ECO:0007669"/>
    <property type="project" value="InterPro"/>
</dbReference>
<dbReference type="FunFam" id="1.10.8.430:FF:000004">
    <property type="entry name" value="Disease resistance protein (TIR-NBS-LRR class)"/>
    <property type="match status" value="1"/>
</dbReference>
<dbReference type="FunFam" id="3.40.50.10140:FF:000025">
    <property type="entry name" value="Disease resistance protein (TIR-NBS-LRR class)"/>
    <property type="match status" value="1"/>
</dbReference>
<dbReference type="FunFam" id="3.40.50.300:FF:001957">
    <property type="entry name" value="Disease resistance protein (TIR-NBS-LRR class)"/>
    <property type="match status" value="1"/>
</dbReference>
<dbReference type="FunFam" id="3.80.10.10:FF:001177">
    <property type="entry name" value="Disease resistance protein RRS1"/>
    <property type="match status" value="1"/>
</dbReference>
<dbReference type="Gene3D" id="1.10.8.430">
    <property type="entry name" value="Helical domain of apoptotic protease-activating factors"/>
    <property type="match status" value="1"/>
</dbReference>
<dbReference type="Gene3D" id="3.40.50.300">
    <property type="entry name" value="P-loop containing nucleotide triphosphate hydrolases"/>
    <property type="match status" value="1"/>
</dbReference>
<dbReference type="Gene3D" id="3.80.10.10">
    <property type="entry name" value="Ribonuclease Inhibitor"/>
    <property type="match status" value="2"/>
</dbReference>
<dbReference type="Gene3D" id="3.40.50.10140">
    <property type="entry name" value="Toll/interleukin-1 receptor homology (TIR) domain"/>
    <property type="match status" value="1"/>
</dbReference>
<dbReference type="Gene3D" id="2.20.25.80">
    <property type="entry name" value="WRKY domain"/>
    <property type="match status" value="1"/>
</dbReference>
<dbReference type="InterPro" id="IPR042197">
    <property type="entry name" value="Apaf_helical"/>
</dbReference>
<dbReference type="InterPro" id="IPR044974">
    <property type="entry name" value="Disease_R_plants"/>
</dbReference>
<dbReference type="InterPro" id="IPR011713">
    <property type="entry name" value="Leu-rich_rpt_3"/>
</dbReference>
<dbReference type="InterPro" id="IPR032675">
    <property type="entry name" value="LRR_dom_sf"/>
</dbReference>
<dbReference type="InterPro" id="IPR002182">
    <property type="entry name" value="NB-ARC"/>
</dbReference>
<dbReference type="InterPro" id="IPR027417">
    <property type="entry name" value="P-loop_NTPase"/>
</dbReference>
<dbReference type="InterPro" id="IPR000157">
    <property type="entry name" value="TIR_dom"/>
</dbReference>
<dbReference type="InterPro" id="IPR035897">
    <property type="entry name" value="Toll_tir_struct_dom_sf"/>
</dbReference>
<dbReference type="InterPro" id="IPR036390">
    <property type="entry name" value="WH_DNA-bd_sf"/>
</dbReference>
<dbReference type="InterPro" id="IPR003657">
    <property type="entry name" value="WRKY_dom"/>
</dbReference>
<dbReference type="InterPro" id="IPR036576">
    <property type="entry name" value="WRKY_dom_sf"/>
</dbReference>
<dbReference type="PANTHER" id="PTHR11017:SF569">
    <property type="entry name" value="DISEASE RESISTANCE PROTEIN"/>
    <property type="match status" value="1"/>
</dbReference>
<dbReference type="PANTHER" id="PTHR11017">
    <property type="entry name" value="LEUCINE-RICH REPEAT-CONTAINING PROTEIN"/>
    <property type="match status" value="1"/>
</dbReference>
<dbReference type="Pfam" id="PF07725">
    <property type="entry name" value="LRR_3"/>
    <property type="match status" value="1"/>
</dbReference>
<dbReference type="Pfam" id="PF00931">
    <property type="entry name" value="NB-ARC"/>
    <property type="match status" value="1"/>
</dbReference>
<dbReference type="Pfam" id="PF23282">
    <property type="entry name" value="WHD_ROQ1"/>
    <property type="match status" value="2"/>
</dbReference>
<dbReference type="Pfam" id="PF03106">
    <property type="entry name" value="WRKY"/>
    <property type="match status" value="1"/>
</dbReference>
<dbReference type="PRINTS" id="PR00364">
    <property type="entry name" value="DISEASERSIST"/>
</dbReference>
<dbReference type="SMART" id="SM00774">
    <property type="entry name" value="WRKY"/>
    <property type="match status" value="1"/>
</dbReference>
<dbReference type="SUPFAM" id="SSF52058">
    <property type="entry name" value="L domain-like"/>
    <property type="match status" value="1"/>
</dbReference>
<dbReference type="SUPFAM" id="SSF52540">
    <property type="entry name" value="P-loop containing nucleoside triphosphate hydrolases"/>
    <property type="match status" value="1"/>
</dbReference>
<dbReference type="SUPFAM" id="SSF52200">
    <property type="entry name" value="Toll/Interleukin receptor TIR domain"/>
    <property type="match status" value="1"/>
</dbReference>
<dbReference type="SUPFAM" id="SSF46785">
    <property type="entry name" value="Winged helix' DNA-binding domain"/>
    <property type="match status" value="1"/>
</dbReference>
<dbReference type="SUPFAM" id="SSF118290">
    <property type="entry name" value="WRKY DNA-binding domain"/>
    <property type="match status" value="1"/>
</dbReference>
<dbReference type="PROSITE" id="PS50104">
    <property type="entry name" value="TIR"/>
    <property type="match status" value="1"/>
</dbReference>
<dbReference type="PROSITE" id="PS50811">
    <property type="entry name" value="WRKY"/>
    <property type="match status" value="1"/>
</dbReference>
<sequence>MTNCEKDEEFVCISCVEEVRYSFVSHLSEALRRKGINNVVVDVDIDDLLFKESQAKIEKAGVSVMVLPGNCDPSEVWLDKFAKVLECQRNNKDQAVVSVLYGDSLLRDQWLSELDFRGLSRIHQSRKECSDSILVEEIVRDVYETHFYVGRIGIYSKLLEIENMVNKQPIGIRCVGIWGMPGIGKTTLAKAVFDQMSSAFDASCFIEDYDKSIHEKGLYCLLEEQLLPGNDATIMKLSSLRDRLNSKRVLVVLDDVCNALVAESFLEGFDWLGPGSLIIITSRDKQVFRLCGINQIYEVQGLNEKEARQLFLLSASIMEDMGEQNLHELSVRVISYANGNPLAISVYGRELKGKKKLSEMETAFLKLKRRPPFKIVDAFKSSYDTLSDNEKNIFLDIACFFQGENVNYVIQLLEGCGFFPHVEIDVLVDKCLVTISENRVWLHKLTQDIGREIINGETVQIERRRRLWEPWSIKYLLEYNEHKANGEPKTTFKRAQGSEEIEGLFLDTSNLRFDLQPSAFKNMLNLRLLKIYCSNPEVHPVINFPTGSLHSLPNELRLLHWENYPLKSLPQNFDPRHLVEINMPYSQLQKLWGGTKNLEMLRTIRLCHSQHLVDIDDLLKAENLEVIDLQGCTRLQNFPAAGRLLRLRVVNLSGCIKIKSVLEIPPNIEKLHLQGTGILALPVSTVKPNHRELVNFLTEIPGLSEASKLERLTSLLESNSSCQDLGKLICLELKDCSCLQSLPNMANLDLNVLDLSGCSSLNSIQGFPRFLKQLYLGGTAIREVPQLPQSLEILNAHGSCLRSLPNMANLEFLKVLDLSGCSELETIQGFPRNLKELYFAGTTLREVPQLPLSLEVLNAHGSDSEKLPMHYKFNNFFDLSQQVVNDFFLKALTYVKHIPRGYTQELINKAPTFSFSAPSHTNQNATFDLQPGSSVMTRLNHSWRNTLVGFGMLVEVAFPEDYCDATDVGISCVCRWSNKEGRSCRIERNFHCWAPGKVVPKVRKDHTFVFSDVNMRPSTGEGNDPDIWAGLVVFEFFPINQQTKCLNDRFTVTRCGVRVINVATGNTSLENISLVLSLDPVEVSGYEVLRVSYDDLQEMDKVLFLYIASLFNDEDVDFVAPLIAGIDLDVSSGLKVLADVSLISVSSNGEIVMHSLQRQMGKEILHGQSMLLSDCESSMTENLSDVPKKEKKHRESKVKKVVSIPAIDEGDLWTWRKYGQKDILGSRFPRGYYRCAYKFTHGCKATKQVQRSETDSNMLAITYLSEHNHPRPTKRKALADSTRSTSSSICSAITTSASSRVFQNKDEPNQPHLPSSSTPPRNAAVLFKMTDMEEFQDNMEVDNDVVDTRTLALFPEFQHQPEEEDPWSTFFDDYNFYF</sequence>
<comment type="function">
    <text evidence="1 7 12">Transcription factor. Interacts specifically with the W box (5'-(T)TGAC[CT]-3'), a frequently occurring elicitor-responsive cis-acting element. Also acts as a disease resistance protein involved in resistance to fungal and bacterial pathogens, including R.solanacearum, P.syringae pv. tomato and C.higginsianum. RRS1 mediated resistance depends on salicylic acid and NDR1 (AC O48915).</text>
</comment>
<comment type="subunit">
    <text evidence="8">Interacts with PopP2, a R.solanacearum type III effector.</text>
</comment>
<comment type="subcellular location">
    <subcellularLocation>
        <location evidence="8">Nucleus</location>
    </subcellularLocation>
    <subcellularLocation>
        <location evidence="13">Cytoplasm</location>
    </subcellularLocation>
    <text evidence="8">The nuclear localization is only detected upon interaction with PopP2.</text>
</comment>
<comment type="miscellaneous">
    <text evidence="12">Ecotypes susceptible to C.higginsianum or R.solanacearum, such as cv. Columbia, contain a protein with a premature stop codon while the longer allele found in cv. Nd-1, cv. Wassilewskija or cv. RLD confers resistance.</text>
</comment>
<comment type="miscellaneous">
    <text evidence="9">The slh1-induced phenotype (severely stunted growth when grown under conditions of low humidity) is suppressed under conditions of high humidity and high temperature.</text>
</comment>
<reference key="1">
    <citation type="journal article" date="2002" name="Proc. Natl. Acad. Sci. U.S.A.">
        <title>Resistance to Ralstonia solanacearum in Arabidopsis thaliana is conferred by the recessive RRS1-R gene, a member of a novel family of resistance genes.</title>
        <authorList>
            <person name="Deslandes L."/>
            <person name="Olivier J."/>
            <person name="Theulieres F."/>
            <person name="Hirsch J."/>
            <person name="Feng D.X."/>
            <person name="Bittner-Eddy P."/>
            <person name="Beynon J."/>
            <person name="Marco Y."/>
        </authorList>
    </citation>
    <scope>NUCLEOTIDE SEQUENCE [GENOMIC DNA / MRNA]</scope>
    <scope>FUNCTION</scope>
    <source>
        <strain>cv. Nd-1</strain>
    </source>
</reference>
<reference key="2">
    <citation type="journal article" date="2005" name="Plant J.">
        <title>A single amino acid insertion in the WRKY domain of the Arabidopsis TIR-NBS-LRR-WRKY-type disease resistance protein SLH1 (sensitive to low humidity 1) causes activation of defense responses and hypersensitive cell death.</title>
        <authorList>
            <person name="Noutoshi Y."/>
            <person name="Ito T."/>
            <person name="Seki M."/>
            <person name="Nakashita H."/>
            <person name="Yoshida S."/>
            <person name="Marco Y."/>
            <person name="Shirasu K."/>
            <person name="Shinozaki K."/>
        </authorList>
    </citation>
    <scope>NUCLEOTIDE SEQUENCE [GENOMIC DNA]</scope>
    <scope>MUTAGENESIS OF LEU-1224</scope>
    <scope>FUNCTION</scope>
    <source>
        <strain>cv. No-0</strain>
    </source>
</reference>
<reference key="3">
    <citation type="journal article" date="2003" name="Proc. Natl. Acad. Sci. U.S.A.">
        <title>Physical interaction between RRS1-R, a protein conferring resistance to bacterial wilt, and PopP2, a type III effector targeted to the plant nucleus.</title>
        <authorList>
            <person name="Deslandes L."/>
            <person name="Olivier J."/>
            <person name="Peeters N."/>
            <person name="Feng D.X."/>
            <person name="Khounlotham M."/>
            <person name="Boucher C."/>
            <person name="Somssich I."/>
            <person name="Genin S."/>
            <person name="Marco Y."/>
        </authorList>
    </citation>
    <scope>INTERACTION WITH POPP2</scope>
    <scope>SUBCELLULAR LOCATION</scope>
    <source>
        <strain>cv. Nd-1</strain>
    </source>
</reference>
<organism evidence="14">
    <name type="scientific">Arabidopsis thaliana</name>
    <name type="common">Mouse-ear cress</name>
    <dbReference type="NCBI Taxonomy" id="3702"/>
    <lineage>
        <taxon>Eukaryota</taxon>
        <taxon>Viridiplantae</taxon>
        <taxon>Streptophyta</taxon>
        <taxon>Embryophyta</taxon>
        <taxon>Tracheophyta</taxon>
        <taxon>Spermatophyta</taxon>
        <taxon>Magnoliopsida</taxon>
        <taxon>eudicotyledons</taxon>
        <taxon>Gunneridae</taxon>
        <taxon>Pentapetalae</taxon>
        <taxon>rosids</taxon>
        <taxon>malvids</taxon>
        <taxon>Brassicales</taxon>
        <taxon>Brassicaceae</taxon>
        <taxon>Camelineae</taxon>
        <taxon>Arabidopsis</taxon>
    </lineage>
</organism>
<keyword id="KW-0067">ATP-binding</keyword>
<keyword id="KW-0963">Cytoplasm</keyword>
<keyword id="KW-0238">DNA-binding</keyword>
<keyword id="KW-0433">Leucine-rich repeat</keyword>
<keyword id="KW-0547">Nucleotide-binding</keyword>
<keyword id="KW-0539">Nucleus</keyword>
<keyword id="KW-0611">Plant defense</keyword>
<keyword id="KW-0677">Repeat</keyword>
<keyword id="KW-0804">Transcription</keyword>
<keyword id="KW-0805">Transcription regulation</keyword>
<protein>
    <recommendedName>
        <fullName evidence="10">Disease resistance protein RRS1</fullName>
    </recommendedName>
    <alternativeName>
        <fullName>Disease resistance protein RCH2</fullName>
    </alternativeName>
    <alternativeName>
        <fullName>Disease resistance protein SLH1</fullName>
    </alternativeName>
    <alternativeName>
        <fullName>Probable WRKY transcription factor 52</fullName>
    </alternativeName>
    <alternativeName>
        <fullName>Protein RPS4-homolog</fullName>
    </alternativeName>
    <alternativeName>
        <fullName evidence="11">Protein SENSITIVE TO LOW HUMIDITY 1</fullName>
    </alternativeName>
    <alternativeName>
        <fullName>Resistance to Colletotrichum higginsianum 2 protein</fullName>
    </alternativeName>
    <alternativeName>
        <fullName evidence="10">Resistance to Ralstonia solanacearum 1 protein</fullName>
    </alternativeName>
    <alternativeName>
        <fullName>WRKY DNA-binding protein 52</fullName>
    </alternativeName>
</protein>